<evidence type="ECO:0000255" key="1">
    <source>
        <dbReference type="HAMAP-Rule" id="MF_00679"/>
    </source>
</evidence>
<accession>A8GMI8</accession>
<proteinExistence type="inferred from homology"/>
<name>HSCA_RICAH</name>
<comment type="function">
    <text evidence="1">Chaperone involved in the maturation of iron-sulfur cluster-containing proteins. Has a low intrinsic ATPase activity which is markedly stimulated by HscB.</text>
</comment>
<comment type="similarity">
    <text evidence="1">Belongs to the heat shock protein 70 family.</text>
</comment>
<protein>
    <recommendedName>
        <fullName evidence="1">Chaperone protein HscA homolog</fullName>
    </recommendedName>
</protein>
<gene>
    <name evidence="1" type="primary">hscA</name>
    <name type="ordered locus">A1C_01475</name>
</gene>
<feature type="chain" id="PRO_1000044881" description="Chaperone protein HscA homolog">
    <location>
        <begin position="1"/>
        <end position="595"/>
    </location>
</feature>
<sequence>MQIIEIREPEQTDFKQKQQIAVGIDFGTTNSLIAIATDRKVKVIKSIDDKEITPTTIDFTSNNFTIGNNKGLRSIKRLFGKTLKEILNTPALFSLVKDYLDVNSNELKLNFANRRIRICEIAAEVFIYLKNQAEEQLKTHITKAVITVPAHFNDAARGEVMLAAKIAGFEVLRLIAEPTAAAYAYGLNNNQKGCYLVYDLGGGTFDVSILNIQEGIFQVIATSGDNMLGGDDIDVVITQYLCNKFDLPNSIDTLQLAKKAKETLTYKDSFNNDNISINRQILEQLILPLVEYTINIAQECLAQAGNPNIDGVILVGGVTRIPLIKDELYKAFKVDILSDIDPDKAVVWGAALQADNLIAPHTNSLLIDVVPLSLGMELYGGIVEKIIMRNTPIPIAVVKEFTTYADNQTGIQFHILQGEREMAVDCRSLARFELKGLPPMKAGNIRAEVTFAIDADGILSVSAYEKISNTSHTIEVKPNHGIDNTEIDIMLENAYKNAQIDYTTRLLQEAIIEAEALISSIEGAMAELTTLLSESEISVINSLLDNIKAAAKARDRILINNSIKEFKSKINKSMDTNLNIIINGVLKGKNINQIQ</sequence>
<reference key="1">
    <citation type="submission" date="2007-09" db="EMBL/GenBank/DDBJ databases">
        <title>Complete genome sequence of Rickettsia akari.</title>
        <authorList>
            <person name="Madan A."/>
            <person name="Fahey J."/>
            <person name="Helton E."/>
            <person name="Ketteman M."/>
            <person name="Madan A."/>
            <person name="Rodrigues S."/>
            <person name="Sanchez A."/>
            <person name="Whiting M."/>
            <person name="Dasch G."/>
            <person name="Eremeeva M."/>
        </authorList>
    </citation>
    <scope>NUCLEOTIDE SEQUENCE [LARGE SCALE GENOMIC DNA]</scope>
    <source>
        <strain>Hartford</strain>
    </source>
</reference>
<organism>
    <name type="scientific">Rickettsia akari (strain Hartford)</name>
    <dbReference type="NCBI Taxonomy" id="293614"/>
    <lineage>
        <taxon>Bacteria</taxon>
        <taxon>Pseudomonadati</taxon>
        <taxon>Pseudomonadota</taxon>
        <taxon>Alphaproteobacteria</taxon>
        <taxon>Rickettsiales</taxon>
        <taxon>Rickettsiaceae</taxon>
        <taxon>Rickettsieae</taxon>
        <taxon>Rickettsia</taxon>
        <taxon>spotted fever group</taxon>
    </lineage>
</organism>
<dbReference type="EMBL" id="CP000847">
    <property type="protein sequence ID" value="ABV74613.1"/>
    <property type="molecule type" value="Genomic_DNA"/>
</dbReference>
<dbReference type="RefSeq" id="WP_012149247.1">
    <property type="nucleotide sequence ID" value="NC_009881.1"/>
</dbReference>
<dbReference type="SMR" id="A8GMI8"/>
<dbReference type="STRING" id="293614.A1C_01475"/>
<dbReference type="KEGG" id="rak:A1C_01475"/>
<dbReference type="eggNOG" id="COG0443">
    <property type="taxonomic scope" value="Bacteria"/>
</dbReference>
<dbReference type="HOGENOM" id="CLU_005965_2_3_5"/>
<dbReference type="Proteomes" id="UP000006830">
    <property type="component" value="Chromosome"/>
</dbReference>
<dbReference type="GO" id="GO:0005524">
    <property type="term" value="F:ATP binding"/>
    <property type="evidence" value="ECO:0007669"/>
    <property type="project" value="UniProtKB-KW"/>
</dbReference>
<dbReference type="GO" id="GO:0016887">
    <property type="term" value="F:ATP hydrolysis activity"/>
    <property type="evidence" value="ECO:0007669"/>
    <property type="project" value="UniProtKB-UniRule"/>
</dbReference>
<dbReference type="GO" id="GO:0140662">
    <property type="term" value="F:ATP-dependent protein folding chaperone"/>
    <property type="evidence" value="ECO:0007669"/>
    <property type="project" value="InterPro"/>
</dbReference>
<dbReference type="GO" id="GO:0051082">
    <property type="term" value="F:unfolded protein binding"/>
    <property type="evidence" value="ECO:0007669"/>
    <property type="project" value="InterPro"/>
</dbReference>
<dbReference type="GO" id="GO:0016226">
    <property type="term" value="P:iron-sulfur cluster assembly"/>
    <property type="evidence" value="ECO:0007669"/>
    <property type="project" value="InterPro"/>
</dbReference>
<dbReference type="Gene3D" id="1.20.1270.10">
    <property type="match status" value="1"/>
</dbReference>
<dbReference type="Gene3D" id="3.30.420.40">
    <property type="match status" value="2"/>
</dbReference>
<dbReference type="Gene3D" id="3.90.640.10">
    <property type="entry name" value="Actin, Chain A, domain 4"/>
    <property type="match status" value="1"/>
</dbReference>
<dbReference type="Gene3D" id="2.60.34.10">
    <property type="entry name" value="Substrate Binding Domain Of DNAk, Chain A, domain 1"/>
    <property type="match status" value="1"/>
</dbReference>
<dbReference type="HAMAP" id="MF_00679">
    <property type="entry name" value="HscA"/>
    <property type="match status" value="1"/>
</dbReference>
<dbReference type="InterPro" id="IPR043129">
    <property type="entry name" value="ATPase_NBD"/>
</dbReference>
<dbReference type="InterPro" id="IPR018181">
    <property type="entry name" value="Heat_shock_70_CS"/>
</dbReference>
<dbReference type="InterPro" id="IPR029048">
    <property type="entry name" value="HSP70_C_sf"/>
</dbReference>
<dbReference type="InterPro" id="IPR029047">
    <property type="entry name" value="HSP70_peptide-bd_sf"/>
</dbReference>
<dbReference type="InterPro" id="IPR013126">
    <property type="entry name" value="Hsp_70_fam"/>
</dbReference>
<dbReference type="InterPro" id="IPR010236">
    <property type="entry name" value="ISC_FeS_clus_asmbl_HscA"/>
</dbReference>
<dbReference type="NCBIfam" id="NF002399">
    <property type="entry name" value="PRK01433.1"/>
    <property type="match status" value="1"/>
</dbReference>
<dbReference type="PANTHER" id="PTHR19375">
    <property type="entry name" value="HEAT SHOCK PROTEIN 70KDA"/>
    <property type="match status" value="1"/>
</dbReference>
<dbReference type="Pfam" id="PF00012">
    <property type="entry name" value="HSP70"/>
    <property type="match status" value="1"/>
</dbReference>
<dbReference type="PRINTS" id="PR00301">
    <property type="entry name" value="HEATSHOCK70"/>
</dbReference>
<dbReference type="SUPFAM" id="SSF53067">
    <property type="entry name" value="Actin-like ATPase domain"/>
    <property type="match status" value="2"/>
</dbReference>
<dbReference type="SUPFAM" id="SSF100934">
    <property type="entry name" value="Heat shock protein 70kD (HSP70), C-terminal subdomain"/>
    <property type="match status" value="1"/>
</dbReference>
<dbReference type="SUPFAM" id="SSF100920">
    <property type="entry name" value="Heat shock protein 70kD (HSP70), peptide-binding domain"/>
    <property type="match status" value="1"/>
</dbReference>
<dbReference type="PROSITE" id="PS00329">
    <property type="entry name" value="HSP70_2"/>
    <property type="match status" value="1"/>
</dbReference>
<dbReference type="PROSITE" id="PS01036">
    <property type="entry name" value="HSP70_3"/>
    <property type="match status" value="1"/>
</dbReference>
<keyword id="KW-0067">ATP-binding</keyword>
<keyword id="KW-0143">Chaperone</keyword>
<keyword id="KW-0547">Nucleotide-binding</keyword>